<accession>C1CUF5</accession>
<gene>
    <name evidence="1" type="primary">rlmH</name>
    <name type="ordered locus">SPT_2259</name>
</gene>
<organism>
    <name type="scientific">Streptococcus pneumoniae (strain Taiwan19F-14)</name>
    <dbReference type="NCBI Taxonomy" id="487213"/>
    <lineage>
        <taxon>Bacteria</taxon>
        <taxon>Bacillati</taxon>
        <taxon>Bacillota</taxon>
        <taxon>Bacilli</taxon>
        <taxon>Lactobacillales</taxon>
        <taxon>Streptococcaceae</taxon>
        <taxon>Streptococcus</taxon>
    </lineage>
</organism>
<evidence type="ECO:0000255" key="1">
    <source>
        <dbReference type="HAMAP-Rule" id="MF_00658"/>
    </source>
</evidence>
<comment type="function">
    <text evidence="1">Specifically methylates the pseudouridine at position 1915 (m3Psi1915) in 23S rRNA.</text>
</comment>
<comment type="catalytic activity">
    <reaction evidence="1">
        <text>pseudouridine(1915) in 23S rRNA + S-adenosyl-L-methionine = N(3)-methylpseudouridine(1915) in 23S rRNA + S-adenosyl-L-homocysteine + H(+)</text>
        <dbReference type="Rhea" id="RHEA:42752"/>
        <dbReference type="Rhea" id="RHEA-COMP:10221"/>
        <dbReference type="Rhea" id="RHEA-COMP:10222"/>
        <dbReference type="ChEBI" id="CHEBI:15378"/>
        <dbReference type="ChEBI" id="CHEBI:57856"/>
        <dbReference type="ChEBI" id="CHEBI:59789"/>
        <dbReference type="ChEBI" id="CHEBI:65314"/>
        <dbReference type="ChEBI" id="CHEBI:74486"/>
        <dbReference type="EC" id="2.1.1.177"/>
    </reaction>
</comment>
<comment type="subunit">
    <text evidence="1">Homodimer.</text>
</comment>
<comment type="subcellular location">
    <subcellularLocation>
        <location evidence="1">Cytoplasm</location>
    </subcellularLocation>
</comment>
<comment type="similarity">
    <text evidence="1">Belongs to the RNA methyltransferase RlmH family.</text>
</comment>
<dbReference type="EC" id="2.1.1.177" evidence="1"/>
<dbReference type="EMBL" id="CP000921">
    <property type="protein sequence ID" value="ACO22607.1"/>
    <property type="molecule type" value="Genomic_DNA"/>
</dbReference>
<dbReference type="RefSeq" id="WP_000695929.1">
    <property type="nucleotide sequence ID" value="NC_012469.1"/>
</dbReference>
<dbReference type="SMR" id="C1CUF5"/>
<dbReference type="GeneID" id="45652538"/>
<dbReference type="KEGG" id="snt:SPT_2259"/>
<dbReference type="HOGENOM" id="CLU_100552_0_0_9"/>
<dbReference type="GO" id="GO:0005737">
    <property type="term" value="C:cytoplasm"/>
    <property type="evidence" value="ECO:0007669"/>
    <property type="project" value="UniProtKB-SubCell"/>
</dbReference>
<dbReference type="GO" id="GO:0070038">
    <property type="term" value="F:rRNA (pseudouridine-N3-)-methyltransferase activity"/>
    <property type="evidence" value="ECO:0007669"/>
    <property type="project" value="UniProtKB-UniRule"/>
</dbReference>
<dbReference type="CDD" id="cd18081">
    <property type="entry name" value="RlmH-like"/>
    <property type="match status" value="1"/>
</dbReference>
<dbReference type="Gene3D" id="3.40.1280.10">
    <property type="match status" value="1"/>
</dbReference>
<dbReference type="HAMAP" id="MF_00658">
    <property type="entry name" value="23SrRNA_methyltr_H"/>
    <property type="match status" value="1"/>
</dbReference>
<dbReference type="InterPro" id="IPR029028">
    <property type="entry name" value="Alpha/beta_knot_MTases"/>
</dbReference>
<dbReference type="InterPro" id="IPR003742">
    <property type="entry name" value="RlmH-like"/>
</dbReference>
<dbReference type="InterPro" id="IPR029026">
    <property type="entry name" value="tRNA_m1G_MTases_N"/>
</dbReference>
<dbReference type="NCBIfam" id="NF000985">
    <property type="entry name" value="PRK00103.1-3"/>
    <property type="match status" value="1"/>
</dbReference>
<dbReference type="NCBIfam" id="TIGR00246">
    <property type="entry name" value="tRNA_RlmH_YbeA"/>
    <property type="match status" value="1"/>
</dbReference>
<dbReference type="PANTHER" id="PTHR33603">
    <property type="entry name" value="METHYLTRANSFERASE"/>
    <property type="match status" value="1"/>
</dbReference>
<dbReference type="PANTHER" id="PTHR33603:SF1">
    <property type="entry name" value="RIBOSOMAL RNA LARGE SUBUNIT METHYLTRANSFERASE H"/>
    <property type="match status" value="1"/>
</dbReference>
<dbReference type="Pfam" id="PF02590">
    <property type="entry name" value="SPOUT_MTase"/>
    <property type="match status" value="1"/>
</dbReference>
<dbReference type="PIRSF" id="PIRSF004505">
    <property type="entry name" value="MT_bac"/>
    <property type="match status" value="1"/>
</dbReference>
<dbReference type="SUPFAM" id="SSF75217">
    <property type="entry name" value="alpha/beta knot"/>
    <property type="match status" value="1"/>
</dbReference>
<keyword id="KW-0963">Cytoplasm</keyword>
<keyword id="KW-0489">Methyltransferase</keyword>
<keyword id="KW-0698">rRNA processing</keyword>
<keyword id="KW-0949">S-adenosyl-L-methionine</keyword>
<keyword id="KW-0808">Transferase</keyword>
<sequence length="159" mass="18099">MKIKVVTVGKLKEKYLKDGIAEYSKRISRFAKFEMIELSDEKTPDKASESENQKILEIEGQRILSKIADRDFVIVLAIEGKTFFSEEFSKQLEETSIKGFSTLTFIIGGSLGLSSSVKNRANLSVSFGRLTLPHQLMRLVLVEQIYRAFTIQQGFPYHK</sequence>
<name>RLMH_STRZT</name>
<feature type="chain" id="PRO_1000199835" description="Ribosomal RNA large subunit methyltransferase H">
    <location>
        <begin position="1"/>
        <end position="159"/>
    </location>
</feature>
<feature type="binding site" evidence="1">
    <location>
        <position position="76"/>
    </location>
    <ligand>
        <name>S-adenosyl-L-methionine</name>
        <dbReference type="ChEBI" id="CHEBI:59789"/>
    </ligand>
</feature>
<feature type="binding site" evidence="1">
    <location>
        <position position="108"/>
    </location>
    <ligand>
        <name>S-adenosyl-L-methionine</name>
        <dbReference type="ChEBI" id="CHEBI:59789"/>
    </ligand>
</feature>
<feature type="binding site" evidence="1">
    <location>
        <begin position="127"/>
        <end position="132"/>
    </location>
    <ligand>
        <name>S-adenosyl-L-methionine</name>
        <dbReference type="ChEBI" id="CHEBI:59789"/>
    </ligand>
</feature>
<reference key="1">
    <citation type="journal article" date="2010" name="Genome Biol.">
        <title>Structure and dynamics of the pan-genome of Streptococcus pneumoniae and closely related species.</title>
        <authorList>
            <person name="Donati C."/>
            <person name="Hiller N.L."/>
            <person name="Tettelin H."/>
            <person name="Muzzi A."/>
            <person name="Croucher N.J."/>
            <person name="Angiuoli S.V."/>
            <person name="Oggioni M."/>
            <person name="Dunning Hotopp J.C."/>
            <person name="Hu F.Z."/>
            <person name="Riley D.R."/>
            <person name="Covacci A."/>
            <person name="Mitchell T.J."/>
            <person name="Bentley S.D."/>
            <person name="Kilian M."/>
            <person name="Ehrlich G.D."/>
            <person name="Rappuoli R."/>
            <person name="Moxon E.R."/>
            <person name="Masignani V."/>
        </authorList>
    </citation>
    <scope>NUCLEOTIDE SEQUENCE [LARGE SCALE GENOMIC DNA]</scope>
    <source>
        <strain>Taiwan19F-14</strain>
    </source>
</reference>
<protein>
    <recommendedName>
        <fullName evidence="1">Ribosomal RNA large subunit methyltransferase H</fullName>
        <ecNumber evidence="1">2.1.1.177</ecNumber>
    </recommendedName>
    <alternativeName>
        <fullName evidence="1">23S rRNA (pseudouridine1915-N3)-methyltransferase</fullName>
    </alternativeName>
    <alternativeName>
        <fullName evidence="1">23S rRNA m3Psi1915 methyltransferase</fullName>
    </alternativeName>
    <alternativeName>
        <fullName evidence="1">rRNA (pseudouridine-N3-)-methyltransferase RlmH</fullName>
    </alternativeName>
</protein>
<proteinExistence type="inferred from homology"/>